<reference key="1">
    <citation type="journal article" date="1994" name="Plasmid">
        <title>Molecular characterization of a plasmid-borne (pGT633) erythromycin resistance determinant (ermGT) from Lactobacillus reuteri 100-63.</title>
        <authorList>
            <person name="Tannock G.W."/>
            <person name="Luchansky J.B."/>
            <person name="Miller L.A."/>
            <person name="Connell H."/>
            <person name="Thode-Andersen S."/>
            <person name="Mercer A.A."/>
            <person name="Klaenhammer T.R."/>
        </authorList>
    </citation>
    <scope>NUCLEOTIDE SEQUENCE [GENOMIC DNA]</scope>
</reference>
<sequence length="244" mass="28967">MNKKNIKDSQNFITSKHHINEILRNVHLNTNDNIIEIGSGKGHFSFELAKRCNYVTAIEIDPKLCRITKNKLIEYENFQVINKDILQFKFPKNKSYKIFGNIPYNISTDIIRKIVFESTATESYLIVEYGFAKRLLNTNRSLALFLMTEVDISILSKIPREYFHPKPRVNSSLIVLKRHPSKISLKDRKQYENFVMKWVNKEYIKLFSKNQFYQALKYARIDDLNNISFEQFLSLFNSYKLFNR</sequence>
<gene>
    <name type="primary">ermGT</name>
</gene>
<evidence type="ECO:0000250" key="1"/>
<evidence type="ECO:0000255" key="2">
    <source>
        <dbReference type="PROSITE-ProRule" id="PRU01026"/>
    </source>
</evidence>
<name>ERMG_LIMRT</name>
<organism>
    <name type="scientific">Limosilactobacillus reuteri</name>
    <name type="common">Lactobacillus reuteri</name>
    <dbReference type="NCBI Taxonomy" id="1598"/>
    <lineage>
        <taxon>Bacteria</taxon>
        <taxon>Bacillati</taxon>
        <taxon>Bacillota</taxon>
        <taxon>Bacilli</taxon>
        <taxon>Lactobacillales</taxon>
        <taxon>Lactobacillaceae</taxon>
        <taxon>Limosilactobacillus</taxon>
    </lineage>
</organism>
<comment type="function">
    <text evidence="1">This protein produces a dimethylation of the adenine residue at position 2085 in 23S rRNA, resulting in reduced affinity between ribosomes and macrolide-lincosamide-streptogramin B antibiotics (By similarity). Is involved in erythromycin resistance.</text>
</comment>
<comment type="catalytic activity">
    <reaction>
        <text>adenosine(2085) in 23S rRNA + 2 S-adenosyl-L-methionine = N(6)-dimethyladenosine(2085) in 23S rRNA + 2 S-adenosyl-L-homocysteine + 2 H(+)</text>
        <dbReference type="Rhea" id="RHEA:42784"/>
        <dbReference type="Rhea" id="RHEA-COMP:10237"/>
        <dbReference type="Rhea" id="RHEA-COMP:10238"/>
        <dbReference type="ChEBI" id="CHEBI:15378"/>
        <dbReference type="ChEBI" id="CHEBI:57856"/>
        <dbReference type="ChEBI" id="CHEBI:59789"/>
        <dbReference type="ChEBI" id="CHEBI:74411"/>
        <dbReference type="ChEBI" id="CHEBI:74493"/>
        <dbReference type="EC" id="2.1.1.184"/>
    </reaction>
</comment>
<comment type="similarity">
    <text evidence="2">Belongs to the class I-like SAM-binding methyltransferase superfamily. rRNA adenine N(6)-methyltransferase family.</text>
</comment>
<feature type="chain" id="PRO_0000101676" description="rRNA adenine N-6-methyltransferase">
    <location>
        <begin position="1"/>
        <end position="244"/>
    </location>
</feature>
<feature type="binding site" evidence="2">
    <location>
        <position position="11"/>
    </location>
    <ligand>
        <name>S-adenosyl-L-methionine</name>
        <dbReference type="ChEBI" id="CHEBI:59789"/>
    </ligand>
</feature>
<feature type="binding site" evidence="2">
    <location>
        <position position="13"/>
    </location>
    <ligand>
        <name>S-adenosyl-L-methionine</name>
        <dbReference type="ChEBI" id="CHEBI:59789"/>
    </ligand>
</feature>
<feature type="binding site" evidence="2">
    <location>
        <position position="38"/>
    </location>
    <ligand>
        <name>S-adenosyl-L-methionine</name>
        <dbReference type="ChEBI" id="CHEBI:59789"/>
    </ligand>
</feature>
<feature type="binding site" evidence="2">
    <location>
        <position position="59"/>
    </location>
    <ligand>
        <name>S-adenosyl-L-methionine</name>
        <dbReference type="ChEBI" id="CHEBI:59789"/>
    </ligand>
</feature>
<feature type="binding site" evidence="2">
    <location>
        <position position="84"/>
    </location>
    <ligand>
        <name>S-adenosyl-L-methionine</name>
        <dbReference type="ChEBI" id="CHEBI:59789"/>
    </ligand>
</feature>
<feature type="binding site" evidence="2">
    <location>
        <position position="101"/>
    </location>
    <ligand>
        <name>S-adenosyl-L-methionine</name>
        <dbReference type="ChEBI" id="CHEBI:59789"/>
    </ligand>
</feature>
<keyword id="KW-0046">Antibiotic resistance</keyword>
<keyword id="KW-0489">Methyltransferase</keyword>
<keyword id="KW-0614">Plasmid</keyword>
<keyword id="KW-0694">RNA-binding</keyword>
<keyword id="KW-0949">S-adenosyl-L-methionine</keyword>
<keyword id="KW-0808">Transferase</keyword>
<accession>Q00014</accession>
<proteinExistence type="inferred from homology"/>
<protein>
    <recommendedName>
        <fullName>rRNA adenine N-6-methyltransferase</fullName>
        <ecNumber>2.1.1.184</ecNumber>
    </recommendedName>
    <alternativeName>
        <fullName>Erythromycin resistance protein</fullName>
    </alternativeName>
    <alternativeName>
        <fullName>Macrolide-lincosamide-streptogramin B resistance protein</fullName>
    </alternativeName>
</protein>
<dbReference type="EC" id="2.1.1.184"/>
<dbReference type="EMBL" id="M64090">
    <property type="protein sequence ID" value="AAA98096.1"/>
    <property type="molecule type" value="Genomic_DNA"/>
</dbReference>
<dbReference type="SMR" id="Q00014"/>
<dbReference type="CARD" id="ARO:3000595">
    <property type="molecule name" value="ErmT"/>
    <property type="mechanism identifier" value="ARO:0001001"/>
    <property type="mechanism name" value="antibiotic target alteration"/>
</dbReference>
<dbReference type="GO" id="GO:0005829">
    <property type="term" value="C:cytosol"/>
    <property type="evidence" value="ECO:0007669"/>
    <property type="project" value="TreeGrafter"/>
</dbReference>
<dbReference type="GO" id="GO:0052910">
    <property type="term" value="F:23S rRNA (adenine(2085)-N(6))-dimethyltransferase activity"/>
    <property type="evidence" value="ECO:0007669"/>
    <property type="project" value="UniProtKB-EC"/>
</dbReference>
<dbReference type="GO" id="GO:0003723">
    <property type="term" value="F:RNA binding"/>
    <property type="evidence" value="ECO:0007669"/>
    <property type="project" value="UniProtKB-KW"/>
</dbReference>
<dbReference type="GO" id="GO:0000179">
    <property type="term" value="F:rRNA (adenine-N6,N6-)-dimethyltransferase activity"/>
    <property type="evidence" value="ECO:0007669"/>
    <property type="project" value="InterPro"/>
</dbReference>
<dbReference type="GO" id="GO:0046677">
    <property type="term" value="P:response to antibiotic"/>
    <property type="evidence" value="ECO:0007669"/>
    <property type="project" value="UniProtKB-KW"/>
</dbReference>
<dbReference type="CDD" id="cd02440">
    <property type="entry name" value="AdoMet_MTases"/>
    <property type="match status" value="1"/>
</dbReference>
<dbReference type="Gene3D" id="1.10.8.100">
    <property type="entry name" value="Ribosomal RNA adenine dimethylase-like, domain 2"/>
    <property type="match status" value="1"/>
</dbReference>
<dbReference type="Gene3D" id="3.40.50.150">
    <property type="entry name" value="Vaccinia Virus protein VP39"/>
    <property type="match status" value="1"/>
</dbReference>
<dbReference type="InterPro" id="IPR001737">
    <property type="entry name" value="KsgA/Erm"/>
</dbReference>
<dbReference type="InterPro" id="IPR023165">
    <property type="entry name" value="rRNA_Ade_diMease-like_C"/>
</dbReference>
<dbReference type="InterPro" id="IPR020596">
    <property type="entry name" value="rRNA_Ade_Mease_Trfase_CS"/>
</dbReference>
<dbReference type="InterPro" id="IPR020598">
    <property type="entry name" value="rRNA_Ade_methylase_Trfase_N"/>
</dbReference>
<dbReference type="InterPro" id="IPR029063">
    <property type="entry name" value="SAM-dependent_MTases_sf"/>
</dbReference>
<dbReference type="NCBIfam" id="NF000499">
    <property type="entry name" value="Erm23S_rRNA_broad"/>
    <property type="match status" value="1"/>
</dbReference>
<dbReference type="PANTHER" id="PTHR11727">
    <property type="entry name" value="DIMETHYLADENOSINE TRANSFERASE"/>
    <property type="match status" value="1"/>
</dbReference>
<dbReference type="PANTHER" id="PTHR11727:SF7">
    <property type="entry name" value="DIMETHYLADENOSINE TRANSFERASE-RELATED"/>
    <property type="match status" value="1"/>
</dbReference>
<dbReference type="Pfam" id="PF00398">
    <property type="entry name" value="RrnaAD"/>
    <property type="match status" value="1"/>
</dbReference>
<dbReference type="SMART" id="SM00650">
    <property type="entry name" value="rADc"/>
    <property type="match status" value="1"/>
</dbReference>
<dbReference type="SUPFAM" id="SSF53335">
    <property type="entry name" value="S-adenosyl-L-methionine-dependent methyltransferases"/>
    <property type="match status" value="1"/>
</dbReference>
<dbReference type="PROSITE" id="PS01131">
    <property type="entry name" value="RRNA_A_DIMETH"/>
    <property type="match status" value="1"/>
</dbReference>
<dbReference type="PROSITE" id="PS51689">
    <property type="entry name" value="SAM_RNA_A_N6_MT"/>
    <property type="match status" value="1"/>
</dbReference>
<geneLocation type="plasmid">
    <name>pGT633</name>
</geneLocation>